<name>ATB40_ARATH</name>
<dbReference type="EMBL" id="Z99708">
    <property type="protein sequence ID" value="CAB16824.1"/>
    <property type="status" value="ALT_SEQ"/>
    <property type="molecule type" value="Genomic_DNA"/>
</dbReference>
<dbReference type="EMBL" id="AL161589">
    <property type="protein sequence ID" value="CAB80340.1"/>
    <property type="status" value="ALT_SEQ"/>
    <property type="molecule type" value="Genomic_DNA"/>
</dbReference>
<dbReference type="EMBL" id="CP002687">
    <property type="protein sequence ID" value="AEE86696.1"/>
    <property type="molecule type" value="Genomic_DNA"/>
</dbReference>
<dbReference type="EMBL" id="BX827896">
    <property type="status" value="NOT_ANNOTATED_CDS"/>
    <property type="molecule type" value="mRNA"/>
</dbReference>
<dbReference type="PIR" id="H85433">
    <property type="entry name" value="H85433"/>
</dbReference>
<dbReference type="SMR" id="O23208"/>
<dbReference type="BioGRID" id="15108">
    <property type="interactions" value="2"/>
</dbReference>
<dbReference type="FunCoup" id="O23208">
    <property type="interactions" value="88"/>
</dbReference>
<dbReference type="STRING" id="3702.O23208"/>
<dbReference type="PaxDb" id="3702-AT4G36740.1"/>
<dbReference type="EnsemblPlants" id="AT4G36740.1">
    <property type="protein sequence ID" value="AT4G36740.1"/>
    <property type="gene ID" value="AT4G36740"/>
</dbReference>
<dbReference type="Gramene" id="AT4G36740.1">
    <property type="protein sequence ID" value="AT4G36740.1"/>
    <property type="gene ID" value="AT4G36740"/>
</dbReference>
<dbReference type="KEGG" id="ath:AT4G36740"/>
<dbReference type="Araport" id="AT4G36740"/>
<dbReference type="TAIR" id="AT4G36740">
    <property type="gene designation" value="HB40"/>
</dbReference>
<dbReference type="eggNOG" id="KOG0483">
    <property type="taxonomic scope" value="Eukaryota"/>
</dbReference>
<dbReference type="HOGENOM" id="CLU_100008_1_0_1"/>
<dbReference type="InParanoid" id="O23208"/>
<dbReference type="OMA" id="FYVHENI"/>
<dbReference type="PhylomeDB" id="O23208"/>
<dbReference type="PRO" id="PR:O23208"/>
<dbReference type="Proteomes" id="UP000006548">
    <property type="component" value="Chromosome 4"/>
</dbReference>
<dbReference type="ExpressionAtlas" id="O23208">
    <property type="expression patterns" value="baseline and differential"/>
</dbReference>
<dbReference type="GO" id="GO:0005634">
    <property type="term" value="C:nucleus"/>
    <property type="evidence" value="ECO:0007669"/>
    <property type="project" value="UniProtKB-SubCell"/>
</dbReference>
<dbReference type="GO" id="GO:0003700">
    <property type="term" value="F:DNA-binding transcription factor activity"/>
    <property type="evidence" value="ECO:0000250"/>
    <property type="project" value="TAIR"/>
</dbReference>
<dbReference type="GO" id="GO:0000981">
    <property type="term" value="F:DNA-binding transcription factor activity, RNA polymerase II-specific"/>
    <property type="evidence" value="ECO:0007669"/>
    <property type="project" value="InterPro"/>
</dbReference>
<dbReference type="GO" id="GO:0000976">
    <property type="term" value="F:transcription cis-regulatory region binding"/>
    <property type="evidence" value="ECO:0000353"/>
    <property type="project" value="TAIR"/>
</dbReference>
<dbReference type="GO" id="GO:0009733">
    <property type="term" value="P:response to auxin"/>
    <property type="evidence" value="ECO:0000270"/>
    <property type="project" value="TAIR"/>
</dbReference>
<dbReference type="CDD" id="cd00086">
    <property type="entry name" value="homeodomain"/>
    <property type="match status" value="1"/>
</dbReference>
<dbReference type="FunFam" id="1.10.10.60:FF:000241">
    <property type="entry name" value="homeobox-leucine zipper protein ATHB-40"/>
    <property type="match status" value="1"/>
</dbReference>
<dbReference type="Gene3D" id="1.10.10.60">
    <property type="entry name" value="Homeodomain-like"/>
    <property type="match status" value="1"/>
</dbReference>
<dbReference type="InterPro" id="IPR001356">
    <property type="entry name" value="HD"/>
</dbReference>
<dbReference type="InterPro" id="IPR045224">
    <property type="entry name" value="HDZip_class_I_plant"/>
</dbReference>
<dbReference type="InterPro" id="IPR017970">
    <property type="entry name" value="Homeobox_CS"/>
</dbReference>
<dbReference type="InterPro" id="IPR009057">
    <property type="entry name" value="Homeodomain-like_sf"/>
</dbReference>
<dbReference type="InterPro" id="IPR000047">
    <property type="entry name" value="HTH_motif"/>
</dbReference>
<dbReference type="PANTHER" id="PTHR24326">
    <property type="entry name" value="HOMEOBOX-LEUCINE ZIPPER PROTEIN"/>
    <property type="match status" value="1"/>
</dbReference>
<dbReference type="PANTHER" id="PTHR24326:SF527">
    <property type="entry name" value="HOMEOBOX-LEUCINE ZIPPER PROTEIN ATHB-40"/>
    <property type="match status" value="1"/>
</dbReference>
<dbReference type="Pfam" id="PF00046">
    <property type="entry name" value="Homeodomain"/>
    <property type="match status" value="1"/>
</dbReference>
<dbReference type="PRINTS" id="PR00031">
    <property type="entry name" value="HTHREPRESSR"/>
</dbReference>
<dbReference type="SMART" id="SM00389">
    <property type="entry name" value="HOX"/>
    <property type="match status" value="1"/>
</dbReference>
<dbReference type="SUPFAM" id="SSF46689">
    <property type="entry name" value="Homeodomain-like"/>
    <property type="match status" value="1"/>
</dbReference>
<dbReference type="PROSITE" id="PS00027">
    <property type="entry name" value="HOMEOBOX_1"/>
    <property type="match status" value="1"/>
</dbReference>
<dbReference type="PROSITE" id="PS50071">
    <property type="entry name" value="HOMEOBOX_2"/>
    <property type="match status" value="1"/>
</dbReference>
<proteinExistence type="evidence at transcript level"/>
<feature type="chain" id="PRO_0000257801" description="Homeobox-leucine zipper protein ATHB-40">
    <location>
        <begin position="1"/>
        <end position="216"/>
    </location>
</feature>
<feature type="DNA-binding region" description="Homeobox" evidence="2">
    <location>
        <begin position="52"/>
        <end position="111"/>
    </location>
</feature>
<feature type="region of interest" description="Disordered" evidence="3">
    <location>
        <begin position="28"/>
        <end position="52"/>
    </location>
</feature>
<feature type="region of interest" description="Leucine-zipper">
    <location>
        <begin position="112"/>
        <end position="140"/>
    </location>
</feature>
<feature type="sequence conflict" description="In Ref. 4; BX827896." evidence="5" ref="4">
    <original>RR</original>
    <variation>LC</variation>
    <location>
        <begin position="103"/>
        <end position="104"/>
    </location>
</feature>
<feature type="sequence conflict" description="In Ref. 4; BX827896." evidence="5" ref="4">
    <original>D</original>
    <variation>Y</variation>
    <location>
        <position position="146"/>
    </location>
</feature>
<feature type="sequence conflict" description="In Ref. 4; BX827896." evidence="5" ref="4">
    <original>H</original>
    <variation>Y</variation>
    <location>
        <position position="195"/>
    </location>
</feature>
<feature type="sequence conflict" description="In Ref. 4; BX827896." evidence="5" ref="4">
    <original>D</original>
    <variation>A</variation>
    <location>
        <position position="207"/>
    </location>
</feature>
<comment type="function">
    <text evidence="1">Probable transcription factor.</text>
</comment>
<comment type="subcellular location">
    <subcellularLocation>
        <location evidence="5">Nucleus</location>
    </subcellularLocation>
</comment>
<comment type="tissue specificity">
    <text evidence="4">Expressed in roots, flowers and siliques.</text>
</comment>
<comment type="induction">
    <text evidence="4">By abscisic acid (ABA) and by salt stress.</text>
</comment>
<comment type="similarity">
    <text evidence="5">Belongs to the HD-ZIP homeobox family. Class I subfamily.</text>
</comment>
<comment type="sequence caution" evidence="5">
    <conflict type="erroneous gene model prediction">
        <sequence resource="EMBL-CDS" id="CAB16824"/>
    </conflict>
</comment>
<comment type="sequence caution" evidence="5">
    <conflict type="erroneous gene model prediction">
        <sequence resource="EMBL-CDS" id="CAB80340"/>
    </conflict>
</comment>
<gene>
    <name type="primary">ATHB-40</name>
    <name type="ordered locus">At4g36740</name>
    <name type="ORF">C7A10.620</name>
</gene>
<reference key="1">
    <citation type="journal article" date="1998" name="Nature">
        <title>Analysis of 1.9 Mb of contiguous sequence from chromosome 4 of Arabidopsis thaliana.</title>
        <authorList>
            <person name="Bevan M."/>
            <person name="Bancroft I."/>
            <person name="Bent E."/>
            <person name="Love K."/>
            <person name="Goodman H.M."/>
            <person name="Dean C."/>
            <person name="Bergkamp R."/>
            <person name="Dirkse W."/>
            <person name="van Staveren M."/>
            <person name="Stiekema W."/>
            <person name="Drost L."/>
            <person name="Ridley P."/>
            <person name="Hudson S.-A."/>
            <person name="Patel K."/>
            <person name="Murphy G."/>
            <person name="Piffanelli P."/>
            <person name="Wedler H."/>
            <person name="Wedler E."/>
            <person name="Wambutt R."/>
            <person name="Weitzenegger T."/>
            <person name="Pohl T."/>
            <person name="Terryn N."/>
            <person name="Gielen J."/>
            <person name="Villarroel R."/>
            <person name="De Clercq R."/>
            <person name="van Montagu M."/>
            <person name="Lecharny A."/>
            <person name="Aubourg S."/>
            <person name="Gy I."/>
            <person name="Kreis M."/>
            <person name="Lao N."/>
            <person name="Kavanagh T."/>
            <person name="Hempel S."/>
            <person name="Kotter P."/>
            <person name="Entian K.-D."/>
            <person name="Rieger M."/>
            <person name="Schaefer M."/>
            <person name="Funk B."/>
            <person name="Mueller-Auer S."/>
            <person name="Silvey M."/>
            <person name="James R."/>
            <person name="Monfort A."/>
            <person name="Pons A."/>
            <person name="Puigdomenech P."/>
            <person name="Douka A."/>
            <person name="Voukelatou E."/>
            <person name="Milioni D."/>
            <person name="Hatzopoulos P."/>
            <person name="Piravandi E."/>
            <person name="Obermaier B."/>
            <person name="Hilbert H."/>
            <person name="Duesterhoeft A."/>
            <person name="Moores T."/>
            <person name="Jones J.D.G."/>
            <person name="Eneva T."/>
            <person name="Palme K."/>
            <person name="Benes V."/>
            <person name="Rechmann S."/>
            <person name="Ansorge W."/>
            <person name="Cooke R."/>
            <person name="Berger C."/>
            <person name="Delseny M."/>
            <person name="Voet M."/>
            <person name="Volckaert G."/>
            <person name="Mewes H.-W."/>
            <person name="Klosterman S."/>
            <person name="Schueller C."/>
            <person name="Chalwatzis N."/>
        </authorList>
    </citation>
    <scope>NUCLEOTIDE SEQUENCE [LARGE SCALE GENOMIC DNA]</scope>
    <source>
        <strain>cv. Columbia</strain>
    </source>
</reference>
<reference key="2">
    <citation type="journal article" date="1999" name="Nature">
        <title>Sequence and analysis of chromosome 4 of the plant Arabidopsis thaliana.</title>
        <authorList>
            <person name="Mayer K.F.X."/>
            <person name="Schueller C."/>
            <person name="Wambutt R."/>
            <person name="Murphy G."/>
            <person name="Volckaert G."/>
            <person name="Pohl T."/>
            <person name="Duesterhoeft A."/>
            <person name="Stiekema W."/>
            <person name="Entian K.-D."/>
            <person name="Terryn N."/>
            <person name="Harris B."/>
            <person name="Ansorge W."/>
            <person name="Brandt P."/>
            <person name="Grivell L.A."/>
            <person name="Rieger M."/>
            <person name="Weichselgartner M."/>
            <person name="de Simone V."/>
            <person name="Obermaier B."/>
            <person name="Mache R."/>
            <person name="Mueller M."/>
            <person name="Kreis M."/>
            <person name="Delseny M."/>
            <person name="Puigdomenech P."/>
            <person name="Watson M."/>
            <person name="Schmidtheini T."/>
            <person name="Reichert B."/>
            <person name="Portetelle D."/>
            <person name="Perez-Alonso M."/>
            <person name="Boutry M."/>
            <person name="Bancroft I."/>
            <person name="Vos P."/>
            <person name="Hoheisel J."/>
            <person name="Zimmermann W."/>
            <person name="Wedler H."/>
            <person name="Ridley P."/>
            <person name="Langham S.-A."/>
            <person name="McCullagh B."/>
            <person name="Bilham L."/>
            <person name="Robben J."/>
            <person name="van der Schueren J."/>
            <person name="Grymonprez B."/>
            <person name="Chuang Y.-J."/>
            <person name="Vandenbussche F."/>
            <person name="Braeken M."/>
            <person name="Weltjens I."/>
            <person name="Voet M."/>
            <person name="Bastiaens I."/>
            <person name="Aert R."/>
            <person name="Defoor E."/>
            <person name="Weitzenegger T."/>
            <person name="Bothe G."/>
            <person name="Ramsperger U."/>
            <person name="Hilbert H."/>
            <person name="Braun M."/>
            <person name="Holzer E."/>
            <person name="Brandt A."/>
            <person name="Peters S."/>
            <person name="van Staveren M."/>
            <person name="Dirkse W."/>
            <person name="Mooijman P."/>
            <person name="Klein Lankhorst R."/>
            <person name="Rose M."/>
            <person name="Hauf J."/>
            <person name="Koetter P."/>
            <person name="Berneiser S."/>
            <person name="Hempel S."/>
            <person name="Feldpausch M."/>
            <person name="Lamberth S."/>
            <person name="Van den Daele H."/>
            <person name="De Keyser A."/>
            <person name="Buysshaert C."/>
            <person name="Gielen J."/>
            <person name="Villarroel R."/>
            <person name="De Clercq R."/>
            <person name="van Montagu M."/>
            <person name="Rogers J."/>
            <person name="Cronin A."/>
            <person name="Quail M.A."/>
            <person name="Bray-Allen S."/>
            <person name="Clark L."/>
            <person name="Doggett J."/>
            <person name="Hall S."/>
            <person name="Kay M."/>
            <person name="Lennard N."/>
            <person name="McLay K."/>
            <person name="Mayes R."/>
            <person name="Pettett A."/>
            <person name="Rajandream M.A."/>
            <person name="Lyne M."/>
            <person name="Benes V."/>
            <person name="Rechmann S."/>
            <person name="Borkova D."/>
            <person name="Bloecker H."/>
            <person name="Scharfe M."/>
            <person name="Grimm M."/>
            <person name="Loehnert T.-H."/>
            <person name="Dose S."/>
            <person name="de Haan M."/>
            <person name="Maarse A.C."/>
            <person name="Schaefer M."/>
            <person name="Mueller-Auer S."/>
            <person name="Gabel C."/>
            <person name="Fuchs M."/>
            <person name="Fartmann B."/>
            <person name="Granderath K."/>
            <person name="Dauner D."/>
            <person name="Herzl A."/>
            <person name="Neumann S."/>
            <person name="Argiriou A."/>
            <person name="Vitale D."/>
            <person name="Liguori R."/>
            <person name="Piravandi E."/>
            <person name="Massenet O."/>
            <person name="Quigley F."/>
            <person name="Clabauld G."/>
            <person name="Muendlein A."/>
            <person name="Felber R."/>
            <person name="Schnabl S."/>
            <person name="Hiller R."/>
            <person name="Schmidt W."/>
            <person name="Lecharny A."/>
            <person name="Aubourg S."/>
            <person name="Chefdor F."/>
            <person name="Cooke R."/>
            <person name="Berger C."/>
            <person name="Monfort A."/>
            <person name="Casacuberta E."/>
            <person name="Gibbons T."/>
            <person name="Weber N."/>
            <person name="Vandenbol M."/>
            <person name="Bargues M."/>
            <person name="Terol J."/>
            <person name="Torres A."/>
            <person name="Perez-Perez A."/>
            <person name="Purnelle B."/>
            <person name="Bent E."/>
            <person name="Johnson S."/>
            <person name="Tacon D."/>
            <person name="Jesse T."/>
            <person name="Heijnen L."/>
            <person name="Schwarz S."/>
            <person name="Scholler P."/>
            <person name="Heber S."/>
            <person name="Francs P."/>
            <person name="Bielke C."/>
            <person name="Frishman D."/>
            <person name="Haase D."/>
            <person name="Lemcke K."/>
            <person name="Mewes H.-W."/>
            <person name="Stocker S."/>
            <person name="Zaccaria P."/>
            <person name="Bevan M."/>
            <person name="Wilson R.K."/>
            <person name="de la Bastide M."/>
            <person name="Habermann K."/>
            <person name="Parnell L."/>
            <person name="Dedhia N."/>
            <person name="Gnoj L."/>
            <person name="Schutz K."/>
            <person name="Huang E."/>
            <person name="Spiegel L."/>
            <person name="Sekhon M."/>
            <person name="Murray J."/>
            <person name="Sheet P."/>
            <person name="Cordes M."/>
            <person name="Abu-Threideh J."/>
            <person name="Stoneking T."/>
            <person name="Kalicki J."/>
            <person name="Graves T."/>
            <person name="Harmon G."/>
            <person name="Edwards J."/>
            <person name="Latreille P."/>
            <person name="Courtney L."/>
            <person name="Cloud J."/>
            <person name="Abbott A."/>
            <person name="Scott K."/>
            <person name="Johnson D."/>
            <person name="Minx P."/>
            <person name="Bentley D."/>
            <person name="Fulton B."/>
            <person name="Miller N."/>
            <person name="Greco T."/>
            <person name="Kemp K."/>
            <person name="Kramer J."/>
            <person name="Fulton L."/>
            <person name="Mardis E."/>
            <person name="Dante M."/>
            <person name="Pepin K."/>
            <person name="Hillier L.W."/>
            <person name="Nelson J."/>
            <person name="Spieth J."/>
            <person name="Ryan E."/>
            <person name="Andrews S."/>
            <person name="Geisel C."/>
            <person name="Layman D."/>
            <person name="Du H."/>
            <person name="Ali J."/>
            <person name="Berghoff A."/>
            <person name="Jones K."/>
            <person name="Drone K."/>
            <person name="Cotton M."/>
            <person name="Joshu C."/>
            <person name="Antonoiu B."/>
            <person name="Zidanic M."/>
            <person name="Strong C."/>
            <person name="Sun H."/>
            <person name="Lamar B."/>
            <person name="Yordan C."/>
            <person name="Ma P."/>
            <person name="Zhong J."/>
            <person name="Preston R."/>
            <person name="Vil D."/>
            <person name="Shekher M."/>
            <person name="Matero A."/>
            <person name="Shah R."/>
            <person name="Swaby I.K."/>
            <person name="O'Shaughnessy A."/>
            <person name="Rodriguez M."/>
            <person name="Hoffman J."/>
            <person name="Till S."/>
            <person name="Granat S."/>
            <person name="Shohdy N."/>
            <person name="Hasegawa A."/>
            <person name="Hameed A."/>
            <person name="Lodhi M."/>
            <person name="Johnson A."/>
            <person name="Chen E."/>
            <person name="Marra M.A."/>
            <person name="Martienssen R."/>
            <person name="McCombie W.R."/>
        </authorList>
    </citation>
    <scope>NUCLEOTIDE SEQUENCE [LARGE SCALE GENOMIC DNA]</scope>
    <source>
        <strain>cv. Columbia</strain>
    </source>
</reference>
<reference key="3">
    <citation type="journal article" date="2017" name="Plant J.">
        <title>Araport11: a complete reannotation of the Arabidopsis thaliana reference genome.</title>
        <authorList>
            <person name="Cheng C.Y."/>
            <person name="Krishnakumar V."/>
            <person name="Chan A.P."/>
            <person name="Thibaud-Nissen F."/>
            <person name="Schobel S."/>
            <person name="Town C.D."/>
        </authorList>
    </citation>
    <scope>GENOME REANNOTATION</scope>
    <source>
        <strain>cv. Columbia</strain>
    </source>
</reference>
<reference key="4">
    <citation type="journal article" date="2004" name="Genome Res.">
        <title>Whole genome sequence comparisons and 'full-length' cDNA sequences: a combined approach to evaluate and improve Arabidopsis genome annotation.</title>
        <authorList>
            <person name="Castelli V."/>
            <person name="Aury J.-M."/>
            <person name="Jaillon O."/>
            <person name="Wincker P."/>
            <person name="Clepet C."/>
            <person name="Menard M."/>
            <person name="Cruaud C."/>
            <person name="Quetier F."/>
            <person name="Scarpelli C."/>
            <person name="Schaechter V."/>
            <person name="Temple G."/>
            <person name="Caboche M."/>
            <person name="Weissenbach J."/>
            <person name="Salanoubat M."/>
        </authorList>
    </citation>
    <scope>NUCLEOTIDE SEQUENCE [LARGE SCALE MRNA] OF 45-216</scope>
    <source>
        <strain>cv. Columbia</strain>
    </source>
</reference>
<reference key="5">
    <citation type="journal article" date="2005" name="Plant Physiol.">
        <title>Homeodomain leucine zipper class I genes in Arabidopsis. Expression patterns and phylogenetic relationships.</title>
        <authorList>
            <person name="Henriksson E."/>
            <person name="Olsson A.S.B."/>
            <person name="Johannesson H."/>
            <person name="Johansson H."/>
            <person name="Hanson J."/>
            <person name="Engstroem P."/>
            <person name="Soederman E."/>
        </authorList>
    </citation>
    <scope>GENE FAMILY</scope>
    <scope>TISSUE SPECIFICITY</scope>
    <scope>INDUCTION</scope>
</reference>
<keyword id="KW-0238">DNA-binding</keyword>
<keyword id="KW-0371">Homeobox</keyword>
<keyword id="KW-0539">Nucleus</keyword>
<keyword id="KW-1185">Reference proteome</keyword>
<keyword id="KW-0346">Stress response</keyword>
<keyword id="KW-0804">Transcription</keyword>
<keyword id="KW-0805">Transcription regulation</keyword>
<sequence length="216" mass="25080">MNYTVDDQNMAFISQLYPDVYTQIVQPGEVKQPKRRRKKTKGSVASADGGNGLFRKRKLTDEQVNMLEMSFGDEHKLESERKDRLAAELGLDPRQVAVWFQNRRARWKNKRLEEEYNKLKNSHDNVVVDKCRLESEVIQLKEQLYDAEREIQRLAERVEGGSSNSPISSSVSVEANETPFFGDYKVGDDGDDYDHLFYPVPENSYIDEAEWMSLYI</sequence>
<accession>O23208</accession>
<evidence type="ECO:0000250" key="1"/>
<evidence type="ECO:0000255" key="2">
    <source>
        <dbReference type="PROSITE-ProRule" id="PRU00108"/>
    </source>
</evidence>
<evidence type="ECO:0000256" key="3">
    <source>
        <dbReference type="SAM" id="MobiDB-lite"/>
    </source>
</evidence>
<evidence type="ECO:0000269" key="4">
    <source>
    </source>
</evidence>
<evidence type="ECO:0000305" key="5"/>
<organism>
    <name type="scientific">Arabidopsis thaliana</name>
    <name type="common">Mouse-ear cress</name>
    <dbReference type="NCBI Taxonomy" id="3702"/>
    <lineage>
        <taxon>Eukaryota</taxon>
        <taxon>Viridiplantae</taxon>
        <taxon>Streptophyta</taxon>
        <taxon>Embryophyta</taxon>
        <taxon>Tracheophyta</taxon>
        <taxon>Spermatophyta</taxon>
        <taxon>Magnoliopsida</taxon>
        <taxon>eudicotyledons</taxon>
        <taxon>Gunneridae</taxon>
        <taxon>Pentapetalae</taxon>
        <taxon>rosids</taxon>
        <taxon>malvids</taxon>
        <taxon>Brassicales</taxon>
        <taxon>Brassicaceae</taxon>
        <taxon>Camelineae</taxon>
        <taxon>Arabidopsis</taxon>
    </lineage>
</organism>
<protein>
    <recommendedName>
        <fullName>Homeobox-leucine zipper protein ATHB-40</fullName>
    </recommendedName>
    <alternativeName>
        <fullName>HD-ZIP protein ATHB-40</fullName>
    </alternativeName>
    <alternativeName>
        <fullName>Homeodomain transcription factor ATHB-40</fullName>
    </alternativeName>
</protein>